<keyword id="KW-0067">ATP-binding</keyword>
<keyword id="KW-0143">Chaperone</keyword>
<keyword id="KW-0963">Cytoplasm</keyword>
<keyword id="KW-0547">Nucleotide-binding</keyword>
<keyword id="KW-1185">Reference proteome</keyword>
<sequence>MAAIGVHFGYTCACVAVFKDGRADVVANDAGDRVTPAVVAYRDTEQIVGIAAKQGRIRNAANTVVKVKQILGRRYDDPDAQAHKEESKCIVVNKSGLPRYEIDTGETTKYVSPEDVAKLIFHKMKETAQSALGSDVKDAVITVPFEFDEMQKNALRQAAESAGFNVLRLIHEPSAALLAYDIGQDSPLGKSHVLVYKLGGTSLSVTVLEVNSGVYRVLATQTDHQTGGESFTQELAQHLAAEFKKTFKQDVSGNARAMMKLMNSADVAKHTLSTLGSANCFVDSLYDGMDFECNVSRARFELICSSLFNKCIQPIKSLLEQVNLSTSDVNKVVLSGGSARIPKLQQMIRDLFPDVELLNSIPPDEVIPVGAAMQAGILVGKDSLALGEDSITVDCCASDITLKEVDDSGLEVFTVLFPSGTPLPARRQHTLQGPGSLSSVRLQLFQAQQPIAQIVLGDLEPKEELHDVVTVLTMKRDGSLHVTCTEQSSGRSEAITIETAAAAS</sequence>
<gene>
    <name type="primary">hspa14</name>
    <name type="ORF">si:dkey-153k10.2</name>
</gene>
<name>HSP7E_DANRE</name>
<dbReference type="EMBL" id="BX901962">
    <property type="protein sequence ID" value="CAI20676.1"/>
    <property type="molecule type" value="Genomic_DNA"/>
</dbReference>
<dbReference type="EMBL" id="BC129343">
    <property type="protein sequence ID" value="AAI29344.1"/>
    <property type="molecule type" value="mRNA"/>
</dbReference>
<dbReference type="RefSeq" id="NP_001038541.1">
    <property type="nucleotide sequence ID" value="NM_001045076.1"/>
</dbReference>
<dbReference type="SMR" id="Q5RGE6"/>
<dbReference type="FunCoup" id="Q5RGE6">
    <property type="interactions" value="1022"/>
</dbReference>
<dbReference type="STRING" id="7955.ENSDARP00000075275"/>
<dbReference type="PaxDb" id="7955-ENSDARP00000075275"/>
<dbReference type="Ensembl" id="ENSDART00000080829">
    <property type="protein sequence ID" value="ENSDARP00000075275"/>
    <property type="gene ID" value="ENSDARG00000058030"/>
</dbReference>
<dbReference type="Ensembl" id="ENSDART00000184048">
    <property type="protein sequence ID" value="ENSDARP00000146414"/>
    <property type="gene ID" value="ENSDARG00000112257"/>
</dbReference>
<dbReference type="GeneID" id="565232"/>
<dbReference type="KEGG" id="dre:565232"/>
<dbReference type="AGR" id="ZFIN:ZDB-GENE-041210-73"/>
<dbReference type="CTD" id="51182"/>
<dbReference type="ZFIN" id="ZDB-GENE-041210-73">
    <property type="gene designation" value="hspa14"/>
</dbReference>
<dbReference type="eggNOG" id="KOG0101">
    <property type="taxonomic scope" value="Eukaryota"/>
</dbReference>
<dbReference type="HOGENOM" id="CLU_005965_0_3_1"/>
<dbReference type="InParanoid" id="Q5RGE6"/>
<dbReference type="OMA" id="GSTCACA"/>
<dbReference type="OrthoDB" id="29851at2759"/>
<dbReference type="PhylomeDB" id="Q5RGE6"/>
<dbReference type="TreeFam" id="TF105045"/>
<dbReference type="Reactome" id="R-DRE-3371453">
    <property type="pathway name" value="Regulation of HSF1-mediated heat shock response"/>
</dbReference>
<dbReference type="PRO" id="PR:Q5RGE6"/>
<dbReference type="Proteomes" id="UP000000437">
    <property type="component" value="Alternate scaffold 4"/>
</dbReference>
<dbReference type="Proteomes" id="UP000000437">
    <property type="component" value="Chromosome 4"/>
</dbReference>
<dbReference type="Bgee" id="ENSDARG00000058030">
    <property type="expression patterns" value="Expressed in presomitic mesoderm and 29 other cell types or tissues"/>
</dbReference>
<dbReference type="ExpressionAtlas" id="Q5RGE6">
    <property type="expression patterns" value="baseline and differential"/>
</dbReference>
<dbReference type="GO" id="GO:0005737">
    <property type="term" value="C:cytoplasm"/>
    <property type="evidence" value="ECO:0000318"/>
    <property type="project" value="GO_Central"/>
</dbReference>
<dbReference type="GO" id="GO:0005829">
    <property type="term" value="C:cytosol"/>
    <property type="evidence" value="ECO:0000250"/>
    <property type="project" value="UniProtKB"/>
</dbReference>
<dbReference type="GO" id="GO:0005634">
    <property type="term" value="C:nucleus"/>
    <property type="evidence" value="ECO:0000318"/>
    <property type="project" value="GO_Central"/>
</dbReference>
<dbReference type="GO" id="GO:0005886">
    <property type="term" value="C:plasma membrane"/>
    <property type="evidence" value="ECO:0000318"/>
    <property type="project" value="GO_Central"/>
</dbReference>
<dbReference type="GO" id="GO:0005524">
    <property type="term" value="F:ATP binding"/>
    <property type="evidence" value="ECO:0007669"/>
    <property type="project" value="UniProtKB-KW"/>
</dbReference>
<dbReference type="GO" id="GO:0016887">
    <property type="term" value="F:ATP hydrolysis activity"/>
    <property type="evidence" value="ECO:0000318"/>
    <property type="project" value="GO_Central"/>
</dbReference>
<dbReference type="GO" id="GO:0140662">
    <property type="term" value="F:ATP-dependent protein folding chaperone"/>
    <property type="evidence" value="ECO:0007669"/>
    <property type="project" value="InterPro"/>
</dbReference>
<dbReference type="GO" id="GO:0031072">
    <property type="term" value="F:heat shock protein binding"/>
    <property type="evidence" value="ECO:0000318"/>
    <property type="project" value="GO_Central"/>
</dbReference>
<dbReference type="GO" id="GO:0044183">
    <property type="term" value="F:protein folding chaperone"/>
    <property type="evidence" value="ECO:0000318"/>
    <property type="project" value="GO_Central"/>
</dbReference>
<dbReference type="GO" id="GO:0051085">
    <property type="term" value="P:chaperone cofactor-dependent protein refolding"/>
    <property type="evidence" value="ECO:0000318"/>
    <property type="project" value="GO_Central"/>
</dbReference>
<dbReference type="GO" id="GO:0042026">
    <property type="term" value="P:protein refolding"/>
    <property type="evidence" value="ECO:0000318"/>
    <property type="project" value="GO_Central"/>
</dbReference>
<dbReference type="CDD" id="cd10238">
    <property type="entry name" value="ASKHA_NBD_HSP70_HSPA14"/>
    <property type="match status" value="1"/>
</dbReference>
<dbReference type="FunFam" id="2.60.34.10:FF:000013">
    <property type="entry name" value="Heat shock 70 kDa protein 14"/>
    <property type="match status" value="1"/>
</dbReference>
<dbReference type="FunFam" id="3.30.30.30:FF:000008">
    <property type="entry name" value="heat shock 70 kDa protein 14"/>
    <property type="match status" value="1"/>
</dbReference>
<dbReference type="FunFam" id="3.90.640.10:FF:000010">
    <property type="entry name" value="heat shock 70 kDa protein 14"/>
    <property type="match status" value="1"/>
</dbReference>
<dbReference type="FunFam" id="3.30.420.40:FF:000171">
    <property type="entry name" value="Heat shock 70 kDa protein 4"/>
    <property type="match status" value="1"/>
</dbReference>
<dbReference type="FunFam" id="3.30.420.40:FF:000433">
    <property type="entry name" value="Heat shock protein family A (Hsp70) member 14"/>
    <property type="match status" value="1"/>
</dbReference>
<dbReference type="Gene3D" id="3.30.30.30">
    <property type="match status" value="1"/>
</dbReference>
<dbReference type="Gene3D" id="3.30.420.40">
    <property type="match status" value="2"/>
</dbReference>
<dbReference type="Gene3D" id="3.90.640.10">
    <property type="entry name" value="Actin, Chain A, domain 4"/>
    <property type="match status" value="1"/>
</dbReference>
<dbReference type="Gene3D" id="2.60.34.10">
    <property type="entry name" value="Substrate Binding Domain Of DNAk, Chain A, domain 1"/>
    <property type="match status" value="1"/>
</dbReference>
<dbReference type="InterPro" id="IPR043129">
    <property type="entry name" value="ATPase_NBD"/>
</dbReference>
<dbReference type="InterPro" id="IPR029047">
    <property type="entry name" value="HSP70_peptide-bd_sf"/>
</dbReference>
<dbReference type="InterPro" id="IPR013126">
    <property type="entry name" value="Hsp_70_fam"/>
</dbReference>
<dbReference type="InterPro" id="IPR042049">
    <property type="entry name" value="HSPA14_NBD"/>
</dbReference>
<dbReference type="PANTHER" id="PTHR19375">
    <property type="entry name" value="HEAT SHOCK PROTEIN 70KDA"/>
    <property type="match status" value="1"/>
</dbReference>
<dbReference type="Pfam" id="PF00012">
    <property type="entry name" value="HSP70"/>
    <property type="match status" value="1"/>
</dbReference>
<dbReference type="PRINTS" id="PR00301">
    <property type="entry name" value="HEATSHOCK70"/>
</dbReference>
<dbReference type="SUPFAM" id="SSF53067">
    <property type="entry name" value="Actin-like ATPase domain"/>
    <property type="match status" value="2"/>
</dbReference>
<dbReference type="SUPFAM" id="SSF100920">
    <property type="entry name" value="Heat shock protein 70kD (HSP70), peptide-binding domain"/>
    <property type="match status" value="1"/>
</dbReference>
<comment type="function">
    <text evidence="1">Component of the ribosome-associated complex (RAC), a complex involved in folding or maintaining nascent polypeptides in a folding-competent state.</text>
</comment>
<comment type="subunit">
    <text evidence="1">Component of ribosome-associated complex (RAC).</text>
</comment>
<comment type="subcellular location">
    <subcellularLocation>
        <location evidence="1">Cytoplasm</location>
        <location evidence="1">Cytosol</location>
    </subcellularLocation>
</comment>
<comment type="similarity">
    <text evidence="2">Belongs to the heat shock protein 70 family.</text>
</comment>
<accession>Q5RGE6</accession>
<accession>A2VD43</accession>
<organism>
    <name type="scientific">Danio rerio</name>
    <name type="common">Zebrafish</name>
    <name type="synonym">Brachydanio rerio</name>
    <dbReference type="NCBI Taxonomy" id="7955"/>
    <lineage>
        <taxon>Eukaryota</taxon>
        <taxon>Metazoa</taxon>
        <taxon>Chordata</taxon>
        <taxon>Craniata</taxon>
        <taxon>Vertebrata</taxon>
        <taxon>Euteleostomi</taxon>
        <taxon>Actinopterygii</taxon>
        <taxon>Neopterygii</taxon>
        <taxon>Teleostei</taxon>
        <taxon>Ostariophysi</taxon>
        <taxon>Cypriniformes</taxon>
        <taxon>Danionidae</taxon>
        <taxon>Danioninae</taxon>
        <taxon>Danio</taxon>
    </lineage>
</organism>
<feature type="chain" id="PRO_0000405827" description="Heat shock 70 kDa protein 14">
    <location>
        <begin position="1"/>
        <end position="504"/>
    </location>
</feature>
<feature type="sequence conflict" description="In Ref. 2; AAI29344." evidence="2" ref="2">
    <original>E</original>
    <variation>A</variation>
    <location>
        <position position="106"/>
    </location>
</feature>
<protein>
    <recommendedName>
        <fullName>Heat shock 70 kDa protein 14</fullName>
    </recommendedName>
</protein>
<proteinExistence type="evidence at transcript level"/>
<reference key="1">
    <citation type="journal article" date="2013" name="Nature">
        <title>The zebrafish reference genome sequence and its relationship to the human genome.</title>
        <authorList>
            <person name="Howe K."/>
            <person name="Clark M.D."/>
            <person name="Torroja C.F."/>
            <person name="Torrance J."/>
            <person name="Berthelot C."/>
            <person name="Muffato M."/>
            <person name="Collins J.E."/>
            <person name="Humphray S."/>
            <person name="McLaren K."/>
            <person name="Matthews L."/>
            <person name="McLaren S."/>
            <person name="Sealy I."/>
            <person name="Caccamo M."/>
            <person name="Churcher C."/>
            <person name="Scott C."/>
            <person name="Barrett J.C."/>
            <person name="Koch R."/>
            <person name="Rauch G.J."/>
            <person name="White S."/>
            <person name="Chow W."/>
            <person name="Kilian B."/>
            <person name="Quintais L.T."/>
            <person name="Guerra-Assuncao J.A."/>
            <person name="Zhou Y."/>
            <person name="Gu Y."/>
            <person name="Yen J."/>
            <person name="Vogel J.H."/>
            <person name="Eyre T."/>
            <person name="Redmond S."/>
            <person name="Banerjee R."/>
            <person name="Chi J."/>
            <person name="Fu B."/>
            <person name="Langley E."/>
            <person name="Maguire S.F."/>
            <person name="Laird G.K."/>
            <person name="Lloyd D."/>
            <person name="Kenyon E."/>
            <person name="Donaldson S."/>
            <person name="Sehra H."/>
            <person name="Almeida-King J."/>
            <person name="Loveland J."/>
            <person name="Trevanion S."/>
            <person name="Jones M."/>
            <person name="Quail M."/>
            <person name="Willey D."/>
            <person name="Hunt A."/>
            <person name="Burton J."/>
            <person name="Sims S."/>
            <person name="McLay K."/>
            <person name="Plumb B."/>
            <person name="Davis J."/>
            <person name="Clee C."/>
            <person name="Oliver K."/>
            <person name="Clark R."/>
            <person name="Riddle C."/>
            <person name="Elliot D."/>
            <person name="Threadgold G."/>
            <person name="Harden G."/>
            <person name="Ware D."/>
            <person name="Begum S."/>
            <person name="Mortimore B."/>
            <person name="Kerry G."/>
            <person name="Heath P."/>
            <person name="Phillimore B."/>
            <person name="Tracey A."/>
            <person name="Corby N."/>
            <person name="Dunn M."/>
            <person name="Johnson C."/>
            <person name="Wood J."/>
            <person name="Clark S."/>
            <person name="Pelan S."/>
            <person name="Griffiths G."/>
            <person name="Smith M."/>
            <person name="Glithero R."/>
            <person name="Howden P."/>
            <person name="Barker N."/>
            <person name="Lloyd C."/>
            <person name="Stevens C."/>
            <person name="Harley J."/>
            <person name="Holt K."/>
            <person name="Panagiotidis G."/>
            <person name="Lovell J."/>
            <person name="Beasley H."/>
            <person name="Henderson C."/>
            <person name="Gordon D."/>
            <person name="Auger K."/>
            <person name="Wright D."/>
            <person name="Collins J."/>
            <person name="Raisen C."/>
            <person name="Dyer L."/>
            <person name="Leung K."/>
            <person name="Robertson L."/>
            <person name="Ambridge K."/>
            <person name="Leongamornlert D."/>
            <person name="McGuire S."/>
            <person name="Gilderthorp R."/>
            <person name="Griffiths C."/>
            <person name="Manthravadi D."/>
            <person name="Nichol S."/>
            <person name="Barker G."/>
            <person name="Whitehead S."/>
            <person name="Kay M."/>
            <person name="Brown J."/>
            <person name="Murnane C."/>
            <person name="Gray E."/>
            <person name="Humphries M."/>
            <person name="Sycamore N."/>
            <person name="Barker D."/>
            <person name="Saunders D."/>
            <person name="Wallis J."/>
            <person name="Babbage A."/>
            <person name="Hammond S."/>
            <person name="Mashreghi-Mohammadi M."/>
            <person name="Barr L."/>
            <person name="Martin S."/>
            <person name="Wray P."/>
            <person name="Ellington A."/>
            <person name="Matthews N."/>
            <person name="Ellwood M."/>
            <person name="Woodmansey R."/>
            <person name="Clark G."/>
            <person name="Cooper J."/>
            <person name="Tromans A."/>
            <person name="Grafham D."/>
            <person name="Skuce C."/>
            <person name="Pandian R."/>
            <person name="Andrews R."/>
            <person name="Harrison E."/>
            <person name="Kimberley A."/>
            <person name="Garnett J."/>
            <person name="Fosker N."/>
            <person name="Hall R."/>
            <person name="Garner P."/>
            <person name="Kelly D."/>
            <person name="Bird C."/>
            <person name="Palmer S."/>
            <person name="Gehring I."/>
            <person name="Berger A."/>
            <person name="Dooley C.M."/>
            <person name="Ersan-Urun Z."/>
            <person name="Eser C."/>
            <person name="Geiger H."/>
            <person name="Geisler M."/>
            <person name="Karotki L."/>
            <person name="Kirn A."/>
            <person name="Konantz J."/>
            <person name="Konantz M."/>
            <person name="Oberlander M."/>
            <person name="Rudolph-Geiger S."/>
            <person name="Teucke M."/>
            <person name="Lanz C."/>
            <person name="Raddatz G."/>
            <person name="Osoegawa K."/>
            <person name="Zhu B."/>
            <person name="Rapp A."/>
            <person name="Widaa S."/>
            <person name="Langford C."/>
            <person name="Yang F."/>
            <person name="Schuster S.C."/>
            <person name="Carter N.P."/>
            <person name="Harrow J."/>
            <person name="Ning Z."/>
            <person name="Herrero J."/>
            <person name="Searle S.M."/>
            <person name="Enright A."/>
            <person name="Geisler R."/>
            <person name="Plasterk R.H."/>
            <person name="Lee C."/>
            <person name="Westerfield M."/>
            <person name="de Jong P.J."/>
            <person name="Zon L.I."/>
            <person name="Postlethwait J.H."/>
            <person name="Nusslein-Volhard C."/>
            <person name="Hubbard T.J."/>
            <person name="Roest Crollius H."/>
            <person name="Rogers J."/>
            <person name="Stemple D.L."/>
        </authorList>
    </citation>
    <scope>NUCLEOTIDE SEQUENCE [LARGE SCALE GENOMIC DNA]</scope>
    <source>
        <strain>Tuebingen</strain>
    </source>
</reference>
<reference key="2">
    <citation type="submission" date="2006-12" db="EMBL/GenBank/DDBJ databases">
        <authorList>
            <consortium name="NIH - Zebrafish Gene Collection (ZGC) project"/>
        </authorList>
    </citation>
    <scope>NUCLEOTIDE SEQUENCE [LARGE SCALE MRNA]</scope>
    <source>
        <tissue>Testis</tissue>
    </source>
</reference>
<evidence type="ECO:0000250" key="1"/>
<evidence type="ECO:0000305" key="2"/>